<geneLocation type="chloroplast"/>
<feature type="chain" id="PRO_0000275670" description="Photosystem I assembly protein Ycf4">
    <location>
        <begin position="1"/>
        <end position="205"/>
    </location>
</feature>
<feature type="transmembrane region" description="Helical" evidence="1">
    <location>
        <begin position="23"/>
        <end position="43"/>
    </location>
</feature>
<feature type="transmembrane region" description="Helical" evidence="1">
    <location>
        <begin position="86"/>
        <end position="106"/>
    </location>
</feature>
<name>YCF4_TETOB</name>
<accession>Q1KVR7</accession>
<organism>
    <name type="scientific">Tetradesmus obliquus</name>
    <name type="common">Green alga</name>
    <name type="synonym">Acutodesmus obliquus</name>
    <dbReference type="NCBI Taxonomy" id="3088"/>
    <lineage>
        <taxon>Eukaryota</taxon>
        <taxon>Viridiplantae</taxon>
        <taxon>Chlorophyta</taxon>
        <taxon>core chlorophytes</taxon>
        <taxon>Chlorophyceae</taxon>
        <taxon>CS clade</taxon>
        <taxon>Sphaeropleales</taxon>
        <taxon>Scenedesmaceae</taxon>
        <taxon>Tetradesmus</taxon>
    </lineage>
</organism>
<sequence>MNQENFIRRYFIIGERRFSNYWWATVILIGSFGFLLTGISSYISTSLNSTALSSNIESQMQLPFFLSMLKNSNSTGAINFFPQGLLMCFYGSLGFLLSIYWWCLIFWNVGGGFNEFNKKENFIRIFRWGYPGKNRKIDLYYTLKDVESIRVEILQGFDSQRTIFLKLKGNREIPITGIGQPLTLQEIEKQASELANFLQVSLEGL</sequence>
<gene>
    <name evidence="1" type="primary">ycf4</name>
</gene>
<protein>
    <recommendedName>
        <fullName evidence="1">Photosystem I assembly protein Ycf4</fullName>
    </recommendedName>
</protein>
<keyword id="KW-0150">Chloroplast</keyword>
<keyword id="KW-0472">Membrane</keyword>
<keyword id="KW-0602">Photosynthesis</keyword>
<keyword id="KW-0934">Plastid</keyword>
<keyword id="KW-0793">Thylakoid</keyword>
<keyword id="KW-0812">Transmembrane</keyword>
<keyword id="KW-1133">Transmembrane helix</keyword>
<comment type="function">
    <text evidence="1">Seems to be required for the assembly of the photosystem I complex.</text>
</comment>
<comment type="subcellular location">
    <subcellularLocation>
        <location evidence="1">Plastid</location>
        <location evidence="1">Chloroplast thylakoid membrane</location>
        <topology evidence="1">Multi-pass membrane protein</topology>
    </subcellularLocation>
</comment>
<comment type="similarity">
    <text evidence="1">Belongs to the Ycf4 family.</text>
</comment>
<dbReference type="EMBL" id="DQ396875">
    <property type="protein sequence ID" value="ABD48290.1"/>
    <property type="molecule type" value="Genomic_DNA"/>
</dbReference>
<dbReference type="RefSeq" id="YP_636007.1">
    <property type="nucleotide sequence ID" value="NC_008101.1"/>
</dbReference>
<dbReference type="SMR" id="Q1KVR7"/>
<dbReference type="GeneID" id="4099840"/>
<dbReference type="GO" id="GO:0009535">
    <property type="term" value="C:chloroplast thylakoid membrane"/>
    <property type="evidence" value="ECO:0007669"/>
    <property type="project" value="UniProtKB-SubCell"/>
</dbReference>
<dbReference type="GO" id="GO:0009522">
    <property type="term" value="C:photosystem I"/>
    <property type="evidence" value="ECO:0007669"/>
    <property type="project" value="InterPro"/>
</dbReference>
<dbReference type="GO" id="GO:0015979">
    <property type="term" value="P:photosynthesis"/>
    <property type="evidence" value="ECO:0007669"/>
    <property type="project" value="UniProtKB-UniRule"/>
</dbReference>
<dbReference type="HAMAP" id="MF_00437">
    <property type="entry name" value="Ycf4"/>
    <property type="match status" value="1"/>
</dbReference>
<dbReference type="InterPro" id="IPR003359">
    <property type="entry name" value="PSI_Ycf4_assembly"/>
</dbReference>
<dbReference type="PANTHER" id="PTHR33288">
    <property type="match status" value="1"/>
</dbReference>
<dbReference type="PANTHER" id="PTHR33288:SF4">
    <property type="entry name" value="PHOTOSYSTEM I ASSEMBLY PROTEIN YCF4"/>
    <property type="match status" value="1"/>
</dbReference>
<dbReference type="Pfam" id="PF02392">
    <property type="entry name" value="Ycf4"/>
    <property type="match status" value="1"/>
</dbReference>
<proteinExistence type="inferred from homology"/>
<reference key="1">
    <citation type="journal article" date="2006" name="BMC Evol. Biol.">
        <title>The complete chloroplast genome sequence of the chlorophycean green alga Scenedesmus obliquus reveals a compact gene organization and a biased distribution of genes on the two DNA strands.</title>
        <authorList>
            <person name="de Cambiaire J.-C."/>
            <person name="Otis C."/>
            <person name="Lemieux C."/>
            <person name="Turmel M."/>
        </authorList>
    </citation>
    <scope>NUCLEOTIDE SEQUENCE [LARGE SCALE GENOMIC DNA]</scope>
    <source>
        <strain>UTEX 393</strain>
    </source>
</reference>
<evidence type="ECO:0000255" key="1">
    <source>
        <dbReference type="HAMAP-Rule" id="MF_00437"/>
    </source>
</evidence>